<reference key="1">
    <citation type="journal article" date="1998" name="Mol. Biol. Evol.">
        <title>Body size effects and rates of cytochrome-b evolution in tube-nosed seabirds.</title>
        <authorList>
            <person name="Nunn G.B."/>
            <person name="Stanley S.E."/>
        </authorList>
    </citation>
    <scope>NUCLEOTIDE SEQUENCE [GENOMIC DNA]</scope>
    <source>
        <strain>Isolate Pufopis-1</strain>
    </source>
</reference>
<name>CYB_PUFOP</name>
<accession>O79226</accession>
<proteinExistence type="inferred from homology"/>
<comment type="function">
    <text evidence="2">Component of the ubiquinol-cytochrome c reductase complex (complex III or cytochrome b-c1 complex) that is part of the mitochondrial respiratory chain. The b-c1 complex mediates electron transfer from ubiquinol to cytochrome c. Contributes to the generation of a proton gradient across the mitochondrial membrane that is then used for ATP synthesis.</text>
</comment>
<comment type="cofactor">
    <cofactor evidence="2">
        <name>heme b</name>
        <dbReference type="ChEBI" id="CHEBI:60344"/>
    </cofactor>
    <text evidence="2">Binds 2 heme b groups non-covalently.</text>
</comment>
<comment type="subunit">
    <text evidence="2">The cytochrome bc1 complex contains 11 subunits: 3 respiratory subunits (MT-CYB, CYC1 and UQCRFS1), 2 core proteins (UQCRC1 and UQCRC2) and 6 low-molecular weight proteins (UQCRH/QCR6, UQCRB/QCR7, UQCRQ/QCR8, UQCR10/QCR9, UQCR11/QCR10 and a cleavage product of UQCRFS1). This cytochrome bc1 complex then forms a dimer.</text>
</comment>
<comment type="subcellular location">
    <subcellularLocation>
        <location evidence="2">Mitochondrion inner membrane</location>
        <topology evidence="2">Multi-pass membrane protein</topology>
    </subcellularLocation>
</comment>
<comment type="miscellaneous">
    <text evidence="1">Heme 1 (or BL or b562) is low-potential and absorbs at about 562 nm, and heme 2 (or BH or b566) is high-potential and absorbs at about 566 nm.</text>
</comment>
<comment type="similarity">
    <text evidence="3 4">Belongs to the cytochrome b family.</text>
</comment>
<comment type="caution">
    <text evidence="2">The full-length protein contains only eight transmembrane helices, not nine as predicted by bioinformatics tools.</text>
</comment>
<sequence>MAPNLRKSHPLLKMVNNSLIDLPAPSNISAWWNFGSLLGICLLTQILTGLLLAMHYTADTTLAFSSVAHTCRNVQYGWLIRNLHANGASFFFICIYLHIGRGFYYGSYLYKETWNTGVILLLTLMATAFVGYVLPWGQMSFWGATVITNLFSAIPYIGQTLVEWAWGGFSVDNPTLTRFFALHFLLPFMIAGLTLIHLTFLHESGSNNPLGIVSNCDKIPFHPYFTLKDILGFMLLLLPLTTLALFSPNLLGDPENFTPANPLVTPPHIKPEWYFLFAYAILRSIPNKLGGVLALAASVLVLFLAPFLHKAKQRAMTFRPISQLLFWILVANLFILTWVGSQPVEHPFIIIGQLASLTYFTILLILFPITGALENKMLNY</sequence>
<dbReference type="EMBL" id="AF076087">
    <property type="protein sequence ID" value="AAC68644.1"/>
    <property type="molecule type" value="Genomic_DNA"/>
</dbReference>
<dbReference type="SMR" id="O79226"/>
<dbReference type="GO" id="GO:0005743">
    <property type="term" value="C:mitochondrial inner membrane"/>
    <property type="evidence" value="ECO:0007669"/>
    <property type="project" value="UniProtKB-SubCell"/>
</dbReference>
<dbReference type="GO" id="GO:0045275">
    <property type="term" value="C:respiratory chain complex III"/>
    <property type="evidence" value="ECO:0007669"/>
    <property type="project" value="InterPro"/>
</dbReference>
<dbReference type="GO" id="GO:0046872">
    <property type="term" value="F:metal ion binding"/>
    <property type="evidence" value="ECO:0007669"/>
    <property type="project" value="UniProtKB-KW"/>
</dbReference>
<dbReference type="GO" id="GO:0008121">
    <property type="term" value="F:ubiquinol-cytochrome-c reductase activity"/>
    <property type="evidence" value="ECO:0007669"/>
    <property type="project" value="InterPro"/>
</dbReference>
<dbReference type="GO" id="GO:0006122">
    <property type="term" value="P:mitochondrial electron transport, ubiquinol to cytochrome c"/>
    <property type="evidence" value="ECO:0007669"/>
    <property type="project" value="TreeGrafter"/>
</dbReference>
<dbReference type="CDD" id="cd00290">
    <property type="entry name" value="cytochrome_b_C"/>
    <property type="match status" value="1"/>
</dbReference>
<dbReference type="CDD" id="cd00284">
    <property type="entry name" value="Cytochrome_b_N"/>
    <property type="match status" value="1"/>
</dbReference>
<dbReference type="FunFam" id="1.20.810.10:FF:000002">
    <property type="entry name" value="Cytochrome b"/>
    <property type="match status" value="1"/>
</dbReference>
<dbReference type="Gene3D" id="1.20.810.10">
    <property type="entry name" value="Cytochrome Bc1 Complex, Chain C"/>
    <property type="match status" value="1"/>
</dbReference>
<dbReference type="InterPro" id="IPR005798">
    <property type="entry name" value="Cyt_b/b6_C"/>
</dbReference>
<dbReference type="InterPro" id="IPR036150">
    <property type="entry name" value="Cyt_b/b6_C_sf"/>
</dbReference>
<dbReference type="InterPro" id="IPR005797">
    <property type="entry name" value="Cyt_b/b6_N"/>
</dbReference>
<dbReference type="InterPro" id="IPR027387">
    <property type="entry name" value="Cytb/b6-like_sf"/>
</dbReference>
<dbReference type="InterPro" id="IPR030689">
    <property type="entry name" value="Cytochrome_b"/>
</dbReference>
<dbReference type="InterPro" id="IPR048260">
    <property type="entry name" value="Cytochrome_b_C_euk/bac"/>
</dbReference>
<dbReference type="InterPro" id="IPR048259">
    <property type="entry name" value="Cytochrome_b_N_euk/bac"/>
</dbReference>
<dbReference type="InterPro" id="IPR016174">
    <property type="entry name" value="Di-haem_cyt_TM"/>
</dbReference>
<dbReference type="PANTHER" id="PTHR19271">
    <property type="entry name" value="CYTOCHROME B"/>
    <property type="match status" value="1"/>
</dbReference>
<dbReference type="PANTHER" id="PTHR19271:SF16">
    <property type="entry name" value="CYTOCHROME B"/>
    <property type="match status" value="1"/>
</dbReference>
<dbReference type="Pfam" id="PF00032">
    <property type="entry name" value="Cytochrom_B_C"/>
    <property type="match status" value="1"/>
</dbReference>
<dbReference type="Pfam" id="PF00033">
    <property type="entry name" value="Cytochrome_B"/>
    <property type="match status" value="1"/>
</dbReference>
<dbReference type="PIRSF" id="PIRSF038885">
    <property type="entry name" value="COB"/>
    <property type="match status" value="1"/>
</dbReference>
<dbReference type="SUPFAM" id="SSF81648">
    <property type="entry name" value="a domain/subunit of cytochrome bc1 complex (Ubiquinol-cytochrome c reductase)"/>
    <property type="match status" value="1"/>
</dbReference>
<dbReference type="SUPFAM" id="SSF81342">
    <property type="entry name" value="Transmembrane di-heme cytochromes"/>
    <property type="match status" value="1"/>
</dbReference>
<dbReference type="PROSITE" id="PS51003">
    <property type="entry name" value="CYTB_CTER"/>
    <property type="match status" value="1"/>
</dbReference>
<dbReference type="PROSITE" id="PS51002">
    <property type="entry name" value="CYTB_NTER"/>
    <property type="match status" value="1"/>
</dbReference>
<keyword id="KW-0249">Electron transport</keyword>
<keyword id="KW-0349">Heme</keyword>
<keyword id="KW-0408">Iron</keyword>
<keyword id="KW-0472">Membrane</keyword>
<keyword id="KW-0479">Metal-binding</keyword>
<keyword id="KW-0496">Mitochondrion</keyword>
<keyword id="KW-0999">Mitochondrion inner membrane</keyword>
<keyword id="KW-0679">Respiratory chain</keyword>
<keyword id="KW-0812">Transmembrane</keyword>
<keyword id="KW-1133">Transmembrane helix</keyword>
<keyword id="KW-0813">Transport</keyword>
<keyword id="KW-0830">Ubiquinone</keyword>
<geneLocation type="mitochondrion"/>
<gene>
    <name type="primary">MT-CYB</name>
    <name type="synonym">COB</name>
    <name type="synonym">CYTB</name>
    <name type="synonym">MTCYB</name>
</gene>
<evidence type="ECO:0000250" key="1"/>
<evidence type="ECO:0000250" key="2">
    <source>
        <dbReference type="UniProtKB" id="P00157"/>
    </source>
</evidence>
<evidence type="ECO:0000255" key="3">
    <source>
        <dbReference type="PROSITE-ProRule" id="PRU00967"/>
    </source>
</evidence>
<evidence type="ECO:0000255" key="4">
    <source>
        <dbReference type="PROSITE-ProRule" id="PRU00968"/>
    </source>
</evidence>
<feature type="chain" id="PRO_0000061471" description="Cytochrome b">
    <location>
        <begin position="1"/>
        <end position="380"/>
    </location>
</feature>
<feature type="transmembrane region" description="Helical" evidence="2">
    <location>
        <begin position="34"/>
        <end position="54"/>
    </location>
</feature>
<feature type="transmembrane region" description="Helical" evidence="2">
    <location>
        <begin position="78"/>
        <end position="99"/>
    </location>
</feature>
<feature type="transmembrane region" description="Helical" evidence="2">
    <location>
        <begin position="114"/>
        <end position="134"/>
    </location>
</feature>
<feature type="transmembrane region" description="Helical" evidence="2">
    <location>
        <begin position="179"/>
        <end position="199"/>
    </location>
</feature>
<feature type="transmembrane region" description="Helical" evidence="2">
    <location>
        <begin position="227"/>
        <end position="247"/>
    </location>
</feature>
<feature type="transmembrane region" description="Helical" evidence="2">
    <location>
        <begin position="289"/>
        <end position="309"/>
    </location>
</feature>
<feature type="transmembrane region" description="Helical" evidence="2">
    <location>
        <begin position="321"/>
        <end position="341"/>
    </location>
</feature>
<feature type="transmembrane region" description="Helical" evidence="2">
    <location>
        <begin position="348"/>
        <end position="368"/>
    </location>
</feature>
<feature type="binding site" description="axial binding residue" evidence="2">
    <location>
        <position position="84"/>
    </location>
    <ligand>
        <name>heme b</name>
        <dbReference type="ChEBI" id="CHEBI:60344"/>
        <label>b562</label>
    </ligand>
    <ligandPart>
        <name>Fe</name>
        <dbReference type="ChEBI" id="CHEBI:18248"/>
    </ligandPart>
</feature>
<feature type="binding site" description="axial binding residue" evidence="2">
    <location>
        <position position="98"/>
    </location>
    <ligand>
        <name>heme b</name>
        <dbReference type="ChEBI" id="CHEBI:60344"/>
        <label>b566</label>
    </ligand>
    <ligandPart>
        <name>Fe</name>
        <dbReference type="ChEBI" id="CHEBI:18248"/>
    </ligandPart>
</feature>
<feature type="binding site" description="axial binding residue" evidence="2">
    <location>
        <position position="183"/>
    </location>
    <ligand>
        <name>heme b</name>
        <dbReference type="ChEBI" id="CHEBI:60344"/>
        <label>b562</label>
    </ligand>
    <ligandPart>
        <name>Fe</name>
        <dbReference type="ChEBI" id="CHEBI:18248"/>
    </ligandPart>
</feature>
<feature type="binding site" description="axial binding residue" evidence="2">
    <location>
        <position position="197"/>
    </location>
    <ligand>
        <name>heme b</name>
        <dbReference type="ChEBI" id="CHEBI:60344"/>
        <label>b566</label>
    </ligand>
    <ligandPart>
        <name>Fe</name>
        <dbReference type="ChEBI" id="CHEBI:18248"/>
    </ligandPart>
</feature>
<feature type="binding site" evidence="2">
    <location>
        <position position="202"/>
    </location>
    <ligand>
        <name>a ubiquinone</name>
        <dbReference type="ChEBI" id="CHEBI:16389"/>
    </ligand>
</feature>
<protein>
    <recommendedName>
        <fullName>Cytochrome b</fullName>
    </recommendedName>
    <alternativeName>
        <fullName>Complex III subunit 3</fullName>
    </alternativeName>
    <alternativeName>
        <fullName>Complex III subunit III</fullName>
    </alternativeName>
    <alternativeName>
        <fullName>Cytochrome b-c1 complex subunit 3</fullName>
    </alternativeName>
    <alternativeName>
        <fullName>Ubiquinol-cytochrome-c reductase complex cytochrome b subunit</fullName>
    </alternativeName>
</protein>
<organism>
    <name type="scientific">Puffinus opisthomelas</name>
    <name type="common">Black-vented shearwater</name>
    <dbReference type="NCBI Taxonomy" id="79642"/>
    <lineage>
        <taxon>Eukaryota</taxon>
        <taxon>Metazoa</taxon>
        <taxon>Chordata</taxon>
        <taxon>Craniata</taxon>
        <taxon>Vertebrata</taxon>
        <taxon>Euteleostomi</taxon>
        <taxon>Archelosauria</taxon>
        <taxon>Archosauria</taxon>
        <taxon>Dinosauria</taxon>
        <taxon>Saurischia</taxon>
        <taxon>Theropoda</taxon>
        <taxon>Coelurosauria</taxon>
        <taxon>Aves</taxon>
        <taxon>Neognathae</taxon>
        <taxon>Neoaves</taxon>
        <taxon>Aequornithes</taxon>
        <taxon>Procellariiformes</taxon>
        <taxon>Procellariidae</taxon>
        <taxon>Puffinus</taxon>
    </lineage>
</organism>